<name>GSA_CUPNH</name>
<gene>
    <name evidence="1" type="primary">hemL</name>
    <name type="ordered locus">H16_A0734</name>
</gene>
<comment type="catalytic activity">
    <reaction evidence="1">
        <text>(S)-4-amino-5-oxopentanoate = 5-aminolevulinate</text>
        <dbReference type="Rhea" id="RHEA:14265"/>
        <dbReference type="ChEBI" id="CHEBI:57501"/>
        <dbReference type="ChEBI" id="CHEBI:356416"/>
        <dbReference type="EC" id="5.4.3.8"/>
    </reaction>
</comment>
<comment type="cofactor">
    <cofactor evidence="1">
        <name>pyridoxal 5'-phosphate</name>
        <dbReference type="ChEBI" id="CHEBI:597326"/>
    </cofactor>
</comment>
<comment type="pathway">
    <text evidence="1">Porphyrin-containing compound metabolism; protoporphyrin-IX biosynthesis; 5-aminolevulinate from L-glutamyl-tRNA(Glu): step 2/2.</text>
</comment>
<comment type="subunit">
    <text evidence="1">Homodimer.</text>
</comment>
<comment type="subcellular location">
    <subcellularLocation>
        <location evidence="1">Cytoplasm</location>
    </subcellularLocation>
</comment>
<comment type="similarity">
    <text evidence="1">Belongs to the class-III pyridoxal-phosphate-dependent aminotransferase family. HemL subfamily.</text>
</comment>
<sequence>MSRNQQLFDRAQQTIPGGVNSPVRAFRSVGGTPRFITRAEGAYMWDADGQRYIDYIGSWGPMIVGHAHPEVVRAVQETAAHSFSFGAPTEAEITMAEEICKLVPSIEQVRLVSSGTEATMSALRLARGFTGRDLIIKFEGCYHGHADSLLVKAGSGLLTFADTTQNAPSSAGVPADVTRHTMVLEYNNVEQLEQAFARHAGEIAAVIVEPVAGNMNLVRASDAFLKAMRELCTRDGAVLILDEVMTGFRVALGGAQAHYGIRPDLTCLGKVIGGGMPAAAFGGRRDIMARLAPLGGVYQAGTLSGNPLAVAAGLATLKLIQAPGFYDRLASQTRKLADGLAEAAKAAGVPFAADAIGGMFGIYFREGVPGSFAEVTRSDTARFNRFFHAMLDHGVYLAPSAFEAGFVSAQHDDAILAATLEAARKAFAAG</sequence>
<keyword id="KW-0963">Cytoplasm</keyword>
<keyword id="KW-0413">Isomerase</keyword>
<keyword id="KW-0627">Porphyrin biosynthesis</keyword>
<keyword id="KW-0663">Pyridoxal phosphate</keyword>
<keyword id="KW-1185">Reference proteome</keyword>
<accession>Q0KDN9</accession>
<evidence type="ECO:0000255" key="1">
    <source>
        <dbReference type="HAMAP-Rule" id="MF_00375"/>
    </source>
</evidence>
<protein>
    <recommendedName>
        <fullName evidence="1">Glutamate-1-semialdehyde 2,1-aminomutase</fullName>
        <shortName evidence="1">GSA</shortName>
        <ecNumber evidence="1">5.4.3.8</ecNumber>
    </recommendedName>
    <alternativeName>
        <fullName evidence="1">Glutamate-1-semialdehyde aminotransferase</fullName>
        <shortName evidence="1">GSA-AT</shortName>
    </alternativeName>
</protein>
<reference key="1">
    <citation type="journal article" date="2006" name="Nat. Biotechnol.">
        <title>Genome sequence of the bioplastic-producing 'Knallgas' bacterium Ralstonia eutropha H16.</title>
        <authorList>
            <person name="Pohlmann A."/>
            <person name="Fricke W.F."/>
            <person name="Reinecke F."/>
            <person name="Kusian B."/>
            <person name="Liesegang H."/>
            <person name="Cramm R."/>
            <person name="Eitinger T."/>
            <person name="Ewering C."/>
            <person name="Poetter M."/>
            <person name="Schwartz E."/>
            <person name="Strittmatter A."/>
            <person name="Voss I."/>
            <person name="Gottschalk G."/>
            <person name="Steinbuechel A."/>
            <person name="Friedrich B."/>
            <person name="Bowien B."/>
        </authorList>
    </citation>
    <scope>NUCLEOTIDE SEQUENCE [LARGE SCALE GENOMIC DNA]</scope>
    <source>
        <strain>ATCC 17699 / DSM 428 / KCTC 22496 / NCIMB 10442 / H16 / Stanier 337</strain>
    </source>
</reference>
<dbReference type="EC" id="5.4.3.8" evidence="1"/>
<dbReference type="EMBL" id="AM260479">
    <property type="protein sequence ID" value="CAJ91882.1"/>
    <property type="molecule type" value="Genomic_DNA"/>
</dbReference>
<dbReference type="RefSeq" id="WP_010813018.1">
    <property type="nucleotide sequence ID" value="NZ_CP039287.1"/>
</dbReference>
<dbReference type="SMR" id="Q0KDN9"/>
<dbReference type="STRING" id="381666.H16_A0734"/>
<dbReference type="KEGG" id="reh:H16_A0734"/>
<dbReference type="eggNOG" id="COG0001">
    <property type="taxonomic scope" value="Bacteria"/>
</dbReference>
<dbReference type="HOGENOM" id="CLU_016922_1_5_4"/>
<dbReference type="OrthoDB" id="3398487at2"/>
<dbReference type="UniPathway" id="UPA00251">
    <property type="reaction ID" value="UER00317"/>
</dbReference>
<dbReference type="Proteomes" id="UP000008210">
    <property type="component" value="Chromosome 1"/>
</dbReference>
<dbReference type="GO" id="GO:0005737">
    <property type="term" value="C:cytoplasm"/>
    <property type="evidence" value="ECO:0007669"/>
    <property type="project" value="UniProtKB-SubCell"/>
</dbReference>
<dbReference type="GO" id="GO:0042286">
    <property type="term" value="F:glutamate-1-semialdehyde 2,1-aminomutase activity"/>
    <property type="evidence" value="ECO:0007669"/>
    <property type="project" value="UniProtKB-UniRule"/>
</dbReference>
<dbReference type="GO" id="GO:0030170">
    <property type="term" value="F:pyridoxal phosphate binding"/>
    <property type="evidence" value="ECO:0007669"/>
    <property type="project" value="InterPro"/>
</dbReference>
<dbReference type="GO" id="GO:0008483">
    <property type="term" value="F:transaminase activity"/>
    <property type="evidence" value="ECO:0007669"/>
    <property type="project" value="InterPro"/>
</dbReference>
<dbReference type="GO" id="GO:0006782">
    <property type="term" value="P:protoporphyrinogen IX biosynthetic process"/>
    <property type="evidence" value="ECO:0007669"/>
    <property type="project" value="UniProtKB-UniRule"/>
</dbReference>
<dbReference type="CDD" id="cd00610">
    <property type="entry name" value="OAT_like"/>
    <property type="match status" value="1"/>
</dbReference>
<dbReference type="FunFam" id="3.40.640.10:FF:000021">
    <property type="entry name" value="Glutamate-1-semialdehyde 2,1-aminomutase"/>
    <property type="match status" value="1"/>
</dbReference>
<dbReference type="Gene3D" id="3.90.1150.10">
    <property type="entry name" value="Aspartate Aminotransferase, domain 1"/>
    <property type="match status" value="1"/>
</dbReference>
<dbReference type="Gene3D" id="3.40.640.10">
    <property type="entry name" value="Type I PLP-dependent aspartate aminotransferase-like (Major domain)"/>
    <property type="match status" value="1"/>
</dbReference>
<dbReference type="HAMAP" id="MF_00375">
    <property type="entry name" value="HemL_aminotrans_3"/>
    <property type="match status" value="1"/>
</dbReference>
<dbReference type="InterPro" id="IPR004639">
    <property type="entry name" value="4pyrrol_synth_GluAld_NH2Trfase"/>
</dbReference>
<dbReference type="InterPro" id="IPR005814">
    <property type="entry name" value="Aminotrans_3"/>
</dbReference>
<dbReference type="InterPro" id="IPR049704">
    <property type="entry name" value="Aminotrans_3_PPA_site"/>
</dbReference>
<dbReference type="InterPro" id="IPR015424">
    <property type="entry name" value="PyrdxlP-dep_Trfase"/>
</dbReference>
<dbReference type="InterPro" id="IPR015421">
    <property type="entry name" value="PyrdxlP-dep_Trfase_major"/>
</dbReference>
<dbReference type="InterPro" id="IPR015422">
    <property type="entry name" value="PyrdxlP-dep_Trfase_small"/>
</dbReference>
<dbReference type="NCBIfam" id="TIGR00713">
    <property type="entry name" value="hemL"/>
    <property type="match status" value="1"/>
</dbReference>
<dbReference type="NCBIfam" id="NF000818">
    <property type="entry name" value="PRK00062.1"/>
    <property type="match status" value="1"/>
</dbReference>
<dbReference type="PANTHER" id="PTHR43713">
    <property type="entry name" value="GLUTAMATE-1-SEMIALDEHYDE 2,1-AMINOMUTASE"/>
    <property type="match status" value="1"/>
</dbReference>
<dbReference type="PANTHER" id="PTHR43713:SF3">
    <property type="entry name" value="GLUTAMATE-1-SEMIALDEHYDE 2,1-AMINOMUTASE 1, CHLOROPLASTIC-RELATED"/>
    <property type="match status" value="1"/>
</dbReference>
<dbReference type="Pfam" id="PF00202">
    <property type="entry name" value="Aminotran_3"/>
    <property type="match status" value="1"/>
</dbReference>
<dbReference type="SUPFAM" id="SSF53383">
    <property type="entry name" value="PLP-dependent transferases"/>
    <property type="match status" value="1"/>
</dbReference>
<dbReference type="PROSITE" id="PS00600">
    <property type="entry name" value="AA_TRANSFER_CLASS_3"/>
    <property type="match status" value="1"/>
</dbReference>
<organism>
    <name type="scientific">Cupriavidus necator (strain ATCC 17699 / DSM 428 / KCTC 22496 / NCIMB 10442 / H16 / Stanier 337)</name>
    <name type="common">Ralstonia eutropha</name>
    <dbReference type="NCBI Taxonomy" id="381666"/>
    <lineage>
        <taxon>Bacteria</taxon>
        <taxon>Pseudomonadati</taxon>
        <taxon>Pseudomonadota</taxon>
        <taxon>Betaproteobacteria</taxon>
        <taxon>Burkholderiales</taxon>
        <taxon>Burkholderiaceae</taxon>
        <taxon>Cupriavidus</taxon>
    </lineage>
</organism>
<proteinExistence type="inferred from homology"/>
<feature type="chain" id="PRO_0000300940" description="Glutamate-1-semialdehyde 2,1-aminomutase">
    <location>
        <begin position="1"/>
        <end position="430"/>
    </location>
</feature>
<feature type="modified residue" description="N6-(pyridoxal phosphate)lysine" evidence="1">
    <location>
        <position position="270"/>
    </location>
</feature>